<accession>Q8P1E3</accession>
<organism>
    <name type="scientific">Streptococcus pyogenes serotype M18 (strain MGAS8232)</name>
    <dbReference type="NCBI Taxonomy" id="186103"/>
    <lineage>
        <taxon>Bacteria</taxon>
        <taxon>Bacillati</taxon>
        <taxon>Bacillota</taxon>
        <taxon>Bacilli</taxon>
        <taxon>Lactobacillales</taxon>
        <taxon>Streptococcaceae</taxon>
        <taxon>Streptococcus</taxon>
    </lineage>
</organism>
<dbReference type="EC" id="2.7.7.72" evidence="1"/>
<dbReference type="EMBL" id="AE009949">
    <property type="protein sequence ID" value="AAL97571.1"/>
    <property type="molecule type" value="Genomic_DNA"/>
</dbReference>
<dbReference type="RefSeq" id="WP_011017668.1">
    <property type="nucleotide sequence ID" value="NC_003485.1"/>
</dbReference>
<dbReference type="SMR" id="Q8P1E3"/>
<dbReference type="KEGG" id="spm:spyM18_0927"/>
<dbReference type="HOGENOM" id="CLU_015961_3_0_9"/>
<dbReference type="GO" id="GO:0005524">
    <property type="term" value="F:ATP binding"/>
    <property type="evidence" value="ECO:0007669"/>
    <property type="project" value="UniProtKB-UniRule"/>
</dbReference>
<dbReference type="GO" id="GO:0004810">
    <property type="term" value="F:CCA tRNA nucleotidyltransferase activity"/>
    <property type="evidence" value="ECO:0007669"/>
    <property type="project" value="UniProtKB-UniRule"/>
</dbReference>
<dbReference type="GO" id="GO:0000287">
    <property type="term" value="F:magnesium ion binding"/>
    <property type="evidence" value="ECO:0007669"/>
    <property type="project" value="UniProtKB-UniRule"/>
</dbReference>
<dbReference type="GO" id="GO:0000049">
    <property type="term" value="F:tRNA binding"/>
    <property type="evidence" value="ECO:0007669"/>
    <property type="project" value="UniProtKB-UniRule"/>
</dbReference>
<dbReference type="GO" id="GO:0042245">
    <property type="term" value="P:RNA repair"/>
    <property type="evidence" value="ECO:0007669"/>
    <property type="project" value="UniProtKB-KW"/>
</dbReference>
<dbReference type="GO" id="GO:0001680">
    <property type="term" value="P:tRNA 3'-terminal CCA addition"/>
    <property type="evidence" value="ECO:0007669"/>
    <property type="project" value="UniProtKB-UniRule"/>
</dbReference>
<dbReference type="CDD" id="cd05398">
    <property type="entry name" value="NT_ClassII-CCAase"/>
    <property type="match status" value="1"/>
</dbReference>
<dbReference type="Gene3D" id="1.10.110.30">
    <property type="match status" value="1"/>
</dbReference>
<dbReference type="Gene3D" id="1.10.246.80">
    <property type="match status" value="1"/>
</dbReference>
<dbReference type="Gene3D" id="1.20.58.560">
    <property type="match status" value="1"/>
</dbReference>
<dbReference type="Gene3D" id="3.30.460.10">
    <property type="entry name" value="Beta Polymerase, domain 2"/>
    <property type="match status" value="1"/>
</dbReference>
<dbReference type="HAMAP" id="MF_01263">
    <property type="entry name" value="CCA_bact_type3"/>
    <property type="match status" value="1"/>
</dbReference>
<dbReference type="InterPro" id="IPR050264">
    <property type="entry name" value="Bact_CCA-adding_enz_type3_sf"/>
</dbReference>
<dbReference type="InterPro" id="IPR032810">
    <property type="entry name" value="CCA-adding_enz_C"/>
</dbReference>
<dbReference type="InterPro" id="IPR023068">
    <property type="entry name" value="CCA-adding_enz_firmicutes"/>
</dbReference>
<dbReference type="InterPro" id="IPR043519">
    <property type="entry name" value="NT_sf"/>
</dbReference>
<dbReference type="InterPro" id="IPR002646">
    <property type="entry name" value="PolA_pol_head_dom"/>
</dbReference>
<dbReference type="InterPro" id="IPR032828">
    <property type="entry name" value="PolyA_RNA-bd"/>
</dbReference>
<dbReference type="NCBIfam" id="NF009814">
    <property type="entry name" value="PRK13299.1"/>
    <property type="match status" value="1"/>
</dbReference>
<dbReference type="PANTHER" id="PTHR46173">
    <property type="entry name" value="CCA TRNA NUCLEOTIDYLTRANSFERASE 1, MITOCHONDRIAL"/>
    <property type="match status" value="1"/>
</dbReference>
<dbReference type="PANTHER" id="PTHR46173:SF1">
    <property type="entry name" value="CCA TRNA NUCLEOTIDYLTRANSFERASE 1, MITOCHONDRIAL"/>
    <property type="match status" value="1"/>
</dbReference>
<dbReference type="Pfam" id="PF01743">
    <property type="entry name" value="PolyA_pol"/>
    <property type="match status" value="1"/>
</dbReference>
<dbReference type="Pfam" id="PF12627">
    <property type="entry name" value="PolyA_pol_RNAbd"/>
    <property type="match status" value="1"/>
</dbReference>
<dbReference type="Pfam" id="PF13735">
    <property type="entry name" value="tRNA_NucTran2_2"/>
    <property type="match status" value="1"/>
</dbReference>
<dbReference type="SUPFAM" id="SSF81301">
    <property type="entry name" value="Nucleotidyltransferase"/>
    <property type="match status" value="1"/>
</dbReference>
<dbReference type="SUPFAM" id="SSF81891">
    <property type="entry name" value="Poly A polymerase C-terminal region-like"/>
    <property type="match status" value="1"/>
</dbReference>
<keyword id="KW-0067">ATP-binding</keyword>
<keyword id="KW-0460">Magnesium</keyword>
<keyword id="KW-0479">Metal-binding</keyword>
<keyword id="KW-0547">Nucleotide-binding</keyword>
<keyword id="KW-0548">Nucleotidyltransferase</keyword>
<keyword id="KW-0692">RNA repair</keyword>
<keyword id="KW-0694">RNA-binding</keyword>
<keyword id="KW-0808">Transferase</keyword>
<keyword id="KW-0819">tRNA processing</keyword>
<reference key="1">
    <citation type="journal article" date="2002" name="Proc. Natl. Acad. Sci. U.S.A.">
        <title>Genome sequence and comparative microarray analysis of serotype M18 group A Streptococcus strains associated with acute rheumatic fever outbreaks.</title>
        <authorList>
            <person name="Smoot J.C."/>
            <person name="Barbian K.D."/>
            <person name="Van Gompel J.J."/>
            <person name="Smoot L.M."/>
            <person name="Chaussee M.S."/>
            <person name="Sylva G.L."/>
            <person name="Sturdevant D.E."/>
            <person name="Ricklefs S.M."/>
            <person name="Porcella S.F."/>
            <person name="Parkins L.D."/>
            <person name="Beres S.B."/>
            <person name="Campbell D.S."/>
            <person name="Smith T.M."/>
            <person name="Zhang Q."/>
            <person name="Kapur V."/>
            <person name="Daly J.A."/>
            <person name="Veasy L.G."/>
            <person name="Musser J.M."/>
        </authorList>
    </citation>
    <scope>NUCLEOTIDE SEQUENCE [LARGE SCALE GENOMIC DNA]</scope>
    <source>
        <strain>MGAS8232</strain>
    </source>
</reference>
<gene>
    <name evidence="1" type="primary">cca</name>
    <name type="ordered locus">spyM18_0927</name>
</gene>
<feature type="chain" id="PRO_0000139061" description="CCA-adding enzyme">
    <location>
        <begin position="1"/>
        <end position="402"/>
    </location>
</feature>
<feature type="binding site" evidence="1">
    <location>
        <position position="32"/>
    </location>
    <ligand>
        <name>ATP</name>
        <dbReference type="ChEBI" id="CHEBI:30616"/>
    </ligand>
</feature>
<feature type="binding site" evidence="1">
    <location>
        <position position="32"/>
    </location>
    <ligand>
        <name>CTP</name>
        <dbReference type="ChEBI" id="CHEBI:37563"/>
    </ligand>
</feature>
<feature type="binding site" evidence="1">
    <location>
        <position position="35"/>
    </location>
    <ligand>
        <name>ATP</name>
        <dbReference type="ChEBI" id="CHEBI:30616"/>
    </ligand>
</feature>
<feature type="binding site" evidence="1">
    <location>
        <position position="35"/>
    </location>
    <ligand>
        <name>CTP</name>
        <dbReference type="ChEBI" id="CHEBI:37563"/>
    </ligand>
</feature>
<feature type="binding site" evidence="1">
    <location>
        <position position="45"/>
    </location>
    <ligand>
        <name>Mg(2+)</name>
        <dbReference type="ChEBI" id="CHEBI:18420"/>
    </ligand>
</feature>
<feature type="binding site" evidence="1">
    <location>
        <position position="47"/>
    </location>
    <ligand>
        <name>Mg(2+)</name>
        <dbReference type="ChEBI" id="CHEBI:18420"/>
    </ligand>
</feature>
<feature type="binding site" evidence="1">
    <location>
        <position position="116"/>
    </location>
    <ligand>
        <name>ATP</name>
        <dbReference type="ChEBI" id="CHEBI:30616"/>
    </ligand>
</feature>
<feature type="binding site" evidence="1">
    <location>
        <position position="116"/>
    </location>
    <ligand>
        <name>CTP</name>
        <dbReference type="ChEBI" id="CHEBI:37563"/>
    </ligand>
</feature>
<feature type="binding site" evidence="1">
    <location>
        <position position="159"/>
    </location>
    <ligand>
        <name>ATP</name>
        <dbReference type="ChEBI" id="CHEBI:30616"/>
    </ligand>
</feature>
<feature type="binding site" evidence="1">
    <location>
        <position position="159"/>
    </location>
    <ligand>
        <name>CTP</name>
        <dbReference type="ChEBI" id="CHEBI:37563"/>
    </ligand>
</feature>
<feature type="binding site" evidence="1">
    <location>
        <position position="162"/>
    </location>
    <ligand>
        <name>ATP</name>
        <dbReference type="ChEBI" id="CHEBI:30616"/>
    </ligand>
</feature>
<feature type="binding site" evidence="1">
    <location>
        <position position="162"/>
    </location>
    <ligand>
        <name>CTP</name>
        <dbReference type="ChEBI" id="CHEBI:37563"/>
    </ligand>
</feature>
<feature type="binding site" evidence="1">
    <location>
        <position position="165"/>
    </location>
    <ligand>
        <name>ATP</name>
        <dbReference type="ChEBI" id="CHEBI:30616"/>
    </ligand>
</feature>
<feature type="binding site" evidence="1">
    <location>
        <position position="165"/>
    </location>
    <ligand>
        <name>CTP</name>
        <dbReference type="ChEBI" id="CHEBI:37563"/>
    </ligand>
</feature>
<feature type="binding site" evidence="1">
    <location>
        <position position="168"/>
    </location>
    <ligand>
        <name>ATP</name>
        <dbReference type="ChEBI" id="CHEBI:30616"/>
    </ligand>
</feature>
<feature type="binding site" evidence="1">
    <location>
        <position position="168"/>
    </location>
    <ligand>
        <name>CTP</name>
        <dbReference type="ChEBI" id="CHEBI:37563"/>
    </ligand>
</feature>
<sequence length="402" mass="46159">MKLMTMPSEFQKALPILTKIKEAGYEAYFVGGSVRDVLLERPIHDVDIATSSYPEETKAIFNRTVDVGIEHGTVLVLENGGEYEITTFRTEDVYVDYRRPSQVSFVRSLEEDLKRRDFTVNALALDENGQVIDKFRGLIDLKQKRLRAVGKAEERFEEDALRIMRGFRFAASLDFDIEAATFEAMRSHSPLLEKISVERSFTEFDKLLMAPHWRKGISAMIACQAYDYLPGLKQQEAGLNHLIVSLKDNFTFSDHHQAWAYVMISLAIEDPKSFLKAWKTSNDFQRYVTKLIALYRIRQERSFEKLDIYQYGKEMASLVEDLRKAQSLSVDMDRINTLDQALVIHDKHDIVLNGSHLIKDFGMKPGPQLGLMLEKVELAIVEGRLDNDFTTIEAFVREELAP</sequence>
<proteinExistence type="inferred from homology"/>
<name>CCA_STRP8</name>
<protein>
    <recommendedName>
        <fullName evidence="1">CCA-adding enzyme</fullName>
        <ecNumber evidence="1">2.7.7.72</ecNumber>
    </recommendedName>
    <alternativeName>
        <fullName evidence="1">CCA tRNA nucleotidyltransferase</fullName>
    </alternativeName>
    <alternativeName>
        <fullName evidence="1">tRNA CCA-pyrophosphorylase</fullName>
    </alternativeName>
    <alternativeName>
        <fullName evidence="1">tRNA adenylyl-/cytidylyl- transferase</fullName>
    </alternativeName>
    <alternativeName>
        <fullName evidence="1">tRNA nucleotidyltransferase</fullName>
    </alternativeName>
    <alternativeName>
        <fullName evidence="1">tRNA-NT</fullName>
    </alternativeName>
</protein>
<comment type="function">
    <text evidence="1">Catalyzes the addition and repair of the essential 3'-terminal CCA sequence in tRNAs without using a nucleic acid template. Adds these three nucleotides in the order of C, C, and A to the tRNA nucleotide-73, using CTP and ATP as substrates and producing inorganic pyrophosphate. tRNA 3'-terminal CCA addition is required both for tRNA processing and repair. Also involved in tRNA surveillance by mediating tandem CCA addition to generate a CCACCA at the 3' terminus of unstable tRNAs. While stable tRNAs receive only 3'-terminal CCA, unstable tRNAs are marked with CCACCA and rapidly degraded.</text>
</comment>
<comment type="catalytic activity">
    <reaction evidence="1">
        <text>a tRNA precursor + 2 CTP + ATP = a tRNA with a 3' CCA end + 3 diphosphate</text>
        <dbReference type="Rhea" id="RHEA:14433"/>
        <dbReference type="Rhea" id="RHEA-COMP:10465"/>
        <dbReference type="Rhea" id="RHEA-COMP:10468"/>
        <dbReference type="ChEBI" id="CHEBI:30616"/>
        <dbReference type="ChEBI" id="CHEBI:33019"/>
        <dbReference type="ChEBI" id="CHEBI:37563"/>
        <dbReference type="ChEBI" id="CHEBI:74896"/>
        <dbReference type="ChEBI" id="CHEBI:83071"/>
        <dbReference type="EC" id="2.7.7.72"/>
    </reaction>
</comment>
<comment type="catalytic activity">
    <reaction evidence="1">
        <text>a tRNA with a 3' CCA end + 2 CTP + ATP = a tRNA with a 3' CCACCA end + 3 diphosphate</text>
        <dbReference type="Rhea" id="RHEA:76235"/>
        <dbReference type="Rhea" id="RHEA-COMP:10468"/>
        <dbReference type="Rhea" id="RHEA-COMP:18655"/>
        <dbReference type="ChEBI" id="CHEBI:30616"/>
        <dbReference type="ChEBI" id="CHEBI:33019"/>
        <dbReference type="ChEBI" id="CHEBI:37563"/>
        <dbReference type="ChEBI" id="CHEBI:83071"/>
        <dbReference type="ChEBI" id="CHEBI:195187"/>
    </reaction>
    <physiologicalReaction direction="left-to-right" evidence="1">
        <dbReference type="Rhea" id="RHEA:76236"/>
    </physiologicalReaction>
</comment>
<comment type="cofactor">
    <cofactor evidence="1">
        <name>Mg(2+)</name>
        <dbReference type="ChEBI" id="CHEBI:18420"/>
    </cofactor>
</comment>
<comment type="subunit">
    <text evidence="1">Homodimer.</text>
</comment>
<comment type="miscellaneous">
    <text evidence="1">A single active site specifically recognizes both ATP and CTP and is responsible for their addition.</text>
</comment>
<comment type="similarity">
    <text evidence="1">Belongs to the tRNA nucleotidyltransferase/poly(A) polymerase family. Bacterial CCA-adding enzyme type 3 subfamily.</text>
</comment>
<evidence type="ECO:0000255" key="1">
    <source>
        <dbReference type="HAMAP-Rule" id="MF_01263"/>
    </source>
</evidence>